<keyword id="KW-0040">ANK repeat</keyword>
<keyword id="KW-1267">Proteomics identification</keyword>
<keyword id="KW-1185">Reference proteome</keyword>
<keyword id="KW-0677">Repeat</keyword>
<gene>
    <name type="primary">ANKRD26P1</name>
</gene>
<sequence length="321" mass="35437">MRRSSGFGGQKGQGPSCSFTGCWCCRGDDVAESDDSPFAQCGYNIQEKHLGKLHRAASRGEVSKVECILSSGSADLDERDKKKRTALHLACANGHPEVVALLVDRGCQLDVFDNKNRTALLKAVQCQEEECATILLEHGADPDLPDVYGNTTLHYAIYNEDIPMTKKLLLHHANIESANKDELTPFLLAVHEQKQQMEDFLRKQKENLTAVKLESIHQVMSEYKENETPRNPQNSNPEGTSNKMACLGEGAAGAKVDEIPGNPVKRLFNKPSIDDSRPMSANEDFDFDTEEKATEPANGKRQNGMGIIESAPQEHTNNENI</sequence>
<reference key="1">
    <citation type="journal article" date="2004" name="Nature">
        <title>The sequence and analysis of duplication-rich human chromosome 16.</title>
        <authorList>
            <person name="Martin J."/>
            <person name="Han C."/>
            <person name="Gordon L.A."/>
            <person name="Terry A."/>
            <person name="Prabhakar S."/>
            <person name="She X."/>
            <person name="Xie G."/>
            <person name="Hellsten U."/>
            <person name="Chan Y.M."/>
            <person name="Altherr M."/>
            <person name="Couronne O."/>
            <person name="Aerts A."/>
            <person name="Bajorek E."/>
            <person name="Black S."/>
            <person name="Blumer H."/>
            <person name="Branscomb E."/>
            <person name="Brown N.C."/>
            <person name="Bruno W.J."/>
            <person name="Buckingham J.M."/>
            <person name="Callen D.F."/>
            <person name="Campbell C.S."/>
            <person name="Campbell M.L."/>
            <person name="Campbell E.W."/>
            <person name="Caoile C."/>
            <person name="Challacombe J.F."/>
            <person name="Chasteen L.A."/>
            <person name="Chertkov O."/>
            <person name="Chi H.C."/>
            <person name="Christensen M."/>
            <person name="Clark L.M."/>
            <person name="Cohn J.D."/>
            <person name="Denys M."/>
            <person name="Detter J.C."/>
            <person name="Dickson M."/>
            <person name="Dimitrijevic-Bussod M."/>
            <person name="Escobar J."/>
            <person name="Fawcett J.J."/>
            <person name="Flowers D."/>
            <person name="Fotopulos D."/>
            <person name="Glavina T."/>
            <person name="Gomez M."/>
            <person name="Gonzales E."/>
            <person name="Goodstein D."/>
            <person name="Goodwin L.A."/>
            <person name="Grady D.L."/>
            <person name="Grigoriev I."/>
            <person name="Groza M."/>
            <person name="Hammon N."/>
            <person name="Hawkins T."/>
            <person name="Haydu L."/>
            <person name="Hildebrand C.E."/>
            <person name="Huang W."/>
            <person name="Israni S."/>
            <person name="Jett J."/>
            <person name="Jewett P.B."/>
            <person name="Kadner K."/>
            <person name="Kimball H."/>
            <person name="Kobayashi A."/>
            <person name="Krawczyk M.-C."/>
            <person name="Leyba T."/>
            <person name="Longmire J.L."/>
            <person name="Lopez F."/>
            <person name="Lou Y."/>
            <person name="Lowry S."/>
            <person name="Ludeman T."/>
            <person name="Manohar C.F."/>
            <person name="Mark G.A."/>
            <person name="McMurray K.L."/>
            <person name="Meincke L.J."/>
            <person name="Morgan J."/>
            <person name="Moyzis R.K."/>
            <person name="Mundt M.O."/>
            <person name="Munk A.C."/>
            <person name="Nandkeshwar R.D."/>
            <person name="Pitluck S."/>
            <person name="Pollard M."/>
            <person name="Predki P."/>
            <person name="Parson-Quintana B."/>
            <person name="Ramirez L."/>
            <person name="Rash S."/>
            <person name="Retterer J."/>
            <person name="Ricke D.O."/>
            <person name="Robinson D.L."/>
            <person name="Rodriguez A."/>
            <person name="Salamov A."/>
            <person name="Saunders E.H."/>
            <person name="Scott D."/>
            <person name="Shough T."/>
            <person name="Stallings R.L."/>
            <person name="Stalvey M."/>
            <person name="Sutherland R.D."/>
            <person name="Tapia R."/>
            <person name="Tesmer J.G."/>
            <person name="Thayer N."/>
            <person name="Thompson L.S."/>
            <person name="Tice H."/>
            <person name="Torney D.C."/>
            <person name="Tran-Gyamfi M."/>
            <person name="Tsai M."/>
            <person name="Ulanovsky L.E."/>
            <person name="Ustaszewska A."/>
            <person name="Vo N."/>
            <person name="White P.S."/>
            <person name="Williams A.L."/>
            <person name="Wills P.L."/>
            <person name="Wu J.-R."/>
            <person name="Wu K."/>
            <person name="Yang J."/>
            <person name="DeJong P."/>
            <person name="Bruce D."/>
            <person name="Doggett N.A."/>
            <person name="Deaven L."/>
            <person name="Schmutz J."/>
            <person name="Grimwood J."/>
            <person name="Richardson P."/>
            <person name="Rokhsar D.S."/>
            <person name="Eichler E.E."/>
            <person name="Gilna P."/>
            <person name="Lucas S.M."/>
            <person name="Myers R.M."/>
            <person name="Rubin E.M."/>
            <person name="Pennacchio L.A."/>
        </authorList>
    </citation>
    <scope>NUCLEOTIDE SEQUENCE [LARGE SCALE GENOMIC DNA]</scope>
</reference>
<reference key="2">
    <citation type="journal article" date="2004" name="Genome Res.">
        <title>The status, quality, and expansion of the NIH full-length cDNA project: the Mammalian Gene Collection (MGC).</title>
        <authorList>
            <consortium name="The MGC Project Team"/>
        </authorList>
    </citation>
    <scope>NUCLEOTIDE SEQUENCE [LARGE SCALE MRNA]</scope>
    <scope>VARIANT THR-265</scope>
    <source>
        <tissue>Testis</tissue>
    </source>
</reference>
<name>AR26L_HUMAN</name>
<organism>
    <name type="scientific">Homo sapiens</name>
    <name type="common">Human</name>
    <dbReference type="NCBI Taxonomy" id="9606"/>
    <lineage>
        <taxon>Eukaryota</taxon>
        <taxon>Metazoa</taxon>
        <taxon>Chordata</taxon>
        <taxon>Craniata</taxon>
        <taxon>Vertebrata</taxon>
        <taxon>Euteleostomi</taxon>
        <taxon>Mammalia</taxon>
        <taxon>Eutheria</taxon>
        <taxon>Euarchontoglires</taxon>
        <taxon>Primates</taxon>
        <taxon>Haplorrhini</taxon>
        <taxon>Catarrhini</taxon>
        <taxon>Hominidae</taxon>
        <taxon>Homo</taxon>
    </lineage>
</organism>
<protein>
    <recommendedName>
        <fullName>Putative ankyrin repeat domain-containing protein 26-like protein</fullName>
    </recommendedName>
</protein>
<evidence type="ECO:0000256" key="1">
    <source>
        <dbReference type="SAM" id="MobiDB-lite"/>
    </source>
</evidence>
<evidence type="ECO:0000269" key="2">
    <source>
    </source>
</evidence>
<evidence type="ECO:0000305" key="3"/>
<dbReference type="EMBL" id="AC092368">
    <property type="status" value="NOT_ANNOTATED_CDS"/>
    <property type="molecule type" value="Genomic_DNA"/>
</dbReference>
<dbReference type="EMBL" id="AC106819">
    <property type="status" value="NOT_ANNOTATED_CDS"/>
    <property type="molecule type" value="Genomic_DNA"/>
</dbReference>
<dbReference type="EMBL" id="BC070117">
    <property type="status" value="NOT_ANNOTATED_CDS"/>
    <property type="molecule type" value="mRNA"/>
</dbReference>
<dbReference type="SMR" id="Q6NSI1"/>
<dbReference type="FunCoup" id="Q6NSI1">
    <property type="interactions" value="5"/>
</dbReference>
<dbReference type="IntAct" id="Q6NSI1">
    <property type="interactions" value="7"/>
</dbReference>
<dbReference type="MINT" id="Q6NSI1"/>
<dbReference type="BioMuta" id="HGNC:32955"/>
<dbReference type="DMDM" id="306526200"/>
<dbReference type="MassIVE" id="Q6NSI1"/>
<dbReference type="ProteomicsDB" id="66628"/>
<dbReference type="AGR" id="HGNC:32955"/>
<dbReference type="GeneCards" id="ANKRD26P1"/>
<dbReference type="HGNC" id="HGNC:32955">
    <property type="gene designation" value="ANKRD26P1"/>
</dbReference>
<dbReference type="neXtProt" id="NX_Q6NSI1"/>
<dbReference type="InParanoid" id="Q6NSI1"/>
<dbReference type="PAN-GO" id="Q6NSI1">
    <property type="GO annotations" value="0 GO annotations based on evolutionary models"/>
</dbReference>
<dbReference type="PhylomeDB" id="Q6NSI1"/>
<dbReference type="PathwayCommons" id="Q6NSI1"/>
<dbReference type="SignaLink" id="Q6NSI1"/>
<dbReference type="ChiTaRS" id="ANKRD26P1">
    <property type="organism name" value="human"/>
</dbReference>
<dbReference type="Pharos" id="Q6NSI1">
    <property type="development level" value="Tdark"/>
</dbReference>
<dbReference type="Proteomes" id="UP000005640">
    <property type="component" value="Unplaced"/>
</dbReference>
<dbReference type="RNAct" id="Q6NSI1">
    <property type="molecule type" value="protein"/>
</dbReference>
<dbReference type="Gene3D" id="1.25.40.20">
    <property type="entry name" value="Ankyrin repeat-containing domain"/>
    <property type="match status" value="1"/>
</dbReference>
<dbReference type="InterPro" id="IPR050657">
    <property type="entry name" value="Ankyrin_repeat_domain"/>
</dbReference>
<dbReference type="InterPro" id="IPR002110">
    <property type="entry name" value="Ankyrin_rpt"/>
</dbReference>
<dbReference type="InterPro" id="IPR036770">
    <property type="entry name" value="Ankyrin_rpt-contain_sf"/>
</dbReference>
<dbReference type="PANTHER" id="PTHR24147">
    <property type="entry name" value="ANKYRIN REPEAT DOMAIN 36-RELATED"/>
    <property type="match status" value="1"/>
</dbReference>
<dbReference type="PANTHER" id="PTHR24147:SF60">
    <property type="entry name" value="ANKYRIN REPEAT DOMAIN-CONTAINING PROTEIN 26-RELATED"/>
    <property type="match status" value="1"/>
</dbReference>
<dbReference type="Pfam" id="PF00023">
    <property type="entry name" value="Ank"/>
    <property type="match status" value="1"/>
</dbReference>
<dbReference type="Pfam" id="PF12796">
    <property type="entry name" value="Ank_2"/>
    <property type="match status" value="1"/>
</dbReference>
<dbReference type="PRINTS" id="PR01415">
    <property type="entry name" value="ANKYRIN"/>
</dbReference>
<dbReference type="SMART" id="SM00248">
    <property type="entry name" value="ANK"/>
    <property type="match status" value="4"/>
</dbReference>
<dbReference type="SUPFAM" id="SSF48403">
    <property type="entry name" value="Ankyrin repeat"/>
    <property type="match status" value="1"/>
</dbReference>
<dbReference type="PROSITE" id="PS50297">
    <property type="entry name" value="ANK_REP_REGION"/>
    <property type="match status" value="1"/>
</dbReference>
<dbReference type="PROSITE" id="PS50088">
    <property type="entry name" value="ANK_REPEAT"/>
    <property type="match status" value="3"/>
</dbReference>
<proteinExistence type="uncertain"/>
<comment type="interaction">
    <interactant intactId="EBI-10250923">
        <id>Q6NSI1</id>
    </interactant>
    <interactant intactId="EBI-1045155">
        <id>P43360</id>
        <label>MAGEA6</label>
    </interactant>
    <organismsDiffer>false</organismsDiffer>
    <experiments>3</experiments>
</comment>
<comment type="caution">
    <text evidence="3">Could be the product of a pseudogene.</text>
</comment>
<feature type="chain" id="PRO_0000326201" description="Putative ankyrin repeat domain-containing protein 26-like protein">
    <location>
        <begin position="1"/>
        <end position="321"/>
    </location>
</feature>
<feature type="repeat" description="ANK 1">
    <location>
        <begin position="48"/>
        <end position="78"/>
    </location>
</feature>
<feature type="repeat" description="ANK 2">
    <location>
        <begin position="82"/>
        <end position="111"/>
    </location>
</feature>
<feature type="repeat" description="ANK 3">
    <location>
        <begin position="115"/>
        <end position="144"/>
    </location>
</feature>
<feature type="repeat" description="ANK 4">
    <location>
        <begin position="148"/>
        <end position="177"/>
    </location>
</feature>
<feature type="repeat" description="ANK 5">
    <location>
        <begin position="181"/>
        <end position="210"/>
    </location>
</feature>
<feature type="region of interest" description="Disordered" evidence="1">
    <location>
        <begin position="222"/>
        <end position="242"/>
    </location>
</feature>
<feature type="region of interest" description="Disordered" evidence="1">
    <location>
        <begin position="268"/>
        <end position="321"/>
    </location>
</feature>
<feature type="compositionally biased region" description="Polar residues" evidence="1">
    <location>
        <begin position="229"/>
        <end position="242"/>
    </location>
</feature>
<feature type="sequence variant" id="VAR_040003" description="In dbSNP:rs1436436." evidence="2">
    <original>K</original>
    <variation>T</variation>
    <location>
        <position position="265"/>
    </location>
</feature>
<accession>Q6NSI1</accession>